<name>RECA_PAEAT</name>
<feature type="chain" id="PRO_1000047885" description="Protein RecA">
    <location>
        <begin position="1"/>
        <end position="347"/>
    </location>
</feature>
<feature type="binding site" evidence="1">
    <location>
        <begin position="67"/>
        <end position="74"/>
    </location>
    <ligand>
        <name>ATP</name>
        <dbReference type="ChEBI" id="CHEBI:30616"/>
    </ligand>
</feature>
<organism>
    <name type="scientific">Paenarthrobacter aurescens (strain TC1)</name>
    <dbReference type="NCBI Taxonomy" id="290340"/>
    <lineage>
        <taxon>Bacteria</taxon>
        <taxon>Bacillati</taxon>
        <taxon>Actinomycetota</taxon>
        <taxon>Actinomycetes</taxon>
        <taxon>Micrococcales</taxon>
        <taxon>Micrococcaceae</taxon>
        <taxon>Paenarthrobacter</taxon>
    </lineage>
</organism>
<dbReference type="EMBL" id="CP000474">
    <property type="protein sequence ID" value="ABM07261.1"/>
    <property type="molecule type" value="Genomic_DNA"/>
</dbReference>
<dbReference type="RefSeq" id="WP_011774305.1">
    <property type="nucleotide sequence ID" value="NC_008711.1"/>
</dbReference>
<dbReference type="SMR" id="A1R548"/>
<dbReference type="STRING" id="290340.AAur_1594"/>
<dbReference type="KEGG" id="aau:AAur_1594"/>
<dbReference type="eggNOG" id="COG0468">
    <property type="taxonomic scope" value="Bacteria"/>
</dbReference>
<dbReference type="HOGENOM" id="CLU_040469_3_2_11"/>
<dbReference type="OrthoDB" id="9776733at2"/>
<dbReference type="Proteomes" id="UP000000637">
    <property type="component" value="Chromosome"/>
</dbReference>
<dbReference type="GO" id="GO:0005829">
    <property type="term" value="C:cytosol"/>
    <property type="evidence" value="ECO:0007669"/>
    <property type="project" value="TreeGrafter"/>
</dbReference>
<dbReference type="GO" id="GO:0005524">
    <property type="term" value="F:ATP binding"/>
    <property type="evidence" value="ECO:0007669"/>
    <property type="project" value="UniProtKB-UniRule"/>
</dbReference>
<dbReference type="GO" id="GO:0016887">
    <property type="term" value="F:ATP hydrolysis activity"/>
    <property type="evidence" value="ECO:0007669"/>
    <property type="project" value="InterPro"/>
</dbReference>
<dbReference type="GO" id="GO:0140664">
    <property type="term" value="F:ATP-dependent DNA damage sensor activity"/>
    <property type="evidence" value="ECO:0007669"/>
    <property type="project" value="InterPro"/>
</dbReference>
<dbReference type="GO" id="GO:0003684">
    <property type="term" value="F:damaged DNA binding"/>
    <property type="evidence" value="ECO:0007669"/>
    <property type="project" value="UniProtKB-UniRule"/>
</dbReference>
<dbReference type="GO" id="GO:0003697">
    <property type="term" value="F:single-stranded DNA binding"/>
    <property type="evidence" value="ECO:0007669"/>
    <property type="project" value="UniProtKB-UniRule"/>
</dbReference>
<dbReference type="GO" id="GO:0006310">
    <property type="term" value="P:DNA recombination"/>
    <property type="evidence" value="ECO:0007669"/>
    <property type="project" value="UniProtKB-UniRule"/>
</dbReference>
<dbReference type="GO" id="GO:0006281">
    <property type="term" value="P:DNA repair"/>
    <property type="evidence" value="ECO:0007669"/>
    <property type="project" value="UniProtKB-UniRule"/>
</dbReference>
<dbReference type="GO" id="GO:0009432">
    <property type="term" value="P:SOS response"/>
    <property type="evidence" value="ECO:0007669"/>
    <property type="project" value="UniProtKB-UniRule"/>
</dbReference>
<dbReference type="CDD" id="cd00983">
    <property type="entry name" value="RecA"/>
    <property type="match status" value="1"/>
</dbReference>
<dbReference type="FunFam" id="3.40.50.300:FF:000087">
    <property type="entry name" value="Recombinase RecA"/>
    <property type="match status" value="1"/>
</dbReference>
<dbReference type="Gene3D" id="3.40.50.300">
    <property type="entry name" value="P-loop containing nucleotide triphosphate hydrolases"/>
    <property type="match status" value="1"/>
</dbReference>
<dbReference type="HAMAP" id="MF_00268">
    <property type="entry name" value="RecA"/>
    <property type="match status" value="1"/>
</dbReference>
<dbReference type="InterPro" id="IPR003593">
    <property type="entry name" value="AAA+_ATPase"/>
</dbReference>
<dbReference type="InterPro" id="IPR013765">
    <property type="entry name" value="DNA_recomb/repair_RecA"/>
</dbReference>
<dbReference type="InterPro" id="IPR020584">
    <property type="entry name" value="DNA_recomb/repair_RecA_CS"/>
</dbReference>
<dbReference type="InterPro" id="IPR027417">
    <property type="entry name" value="P-loop_NTPase"/>
</dbReference>
<dbReference type="InterPro" id="IPR049261">
    <property type="entry name" value="RecA-like_C"/>
</dbReference>
<dbReference type="InterPro" id="IPR049428">
    <property type="entry name" value="RecA-like_N"/>
</dbReference>
<dbReference type="InterPro" id="IPR020588">
    <property type="entry name" value="RecA_ATP-bd"/>
</dbReference>
<dbReference type="InterPro" id="IPR023400">
    <property type="entry name" value="RecA_C_sf"/>
</dbReference>
<dbReference type="InterPro" id="IPR020587">
    <property type="entry name" value="RecA_monomer-monomer_interface"/>
</dbReference>
<dbReference type="NCBIfam" id="TIGR02012">
    <property type="entry name" value="tigrfam_recA"/>
    <property type="match status" value="1"/>
</dbReference>
<dbReference type="PANTHER" id="PTHR45900:SF1">
    <property type="entry name" value="MITOCHONDRIAL DNA REPAIR PROTEIN RECA HOMOLOG-RELATED"/>
    <property type="match status" value="1"/>
</dbReference>
<dbReference type="PANTHER" id="PTHR45900">
    <property type="entry name" value="RECA"/>
    <property type="match status" value="1"/>
</dbReference>
<dbReference type="Pfam" id="PF00154">
    <property type="entry name" value="RecA"/>
    <property type="match status" value="1"/>
</dbReference>
<dbReference type="Pfam" id="PF21096">
    <property type="entry name" value="RecA_C"/>
    <property type="match status" value="1"/>
</dbReference>
<dbReference type="PRINTS" id="PR00142">
    <property type="entry name" value="RECA"/>
</dbReference>
<dbReference type="SMART" id="SM00382">
    <property type="entry name" value="AAA"/>
    <property type="match status" value="1"/>
</dbReference>
<dbReference type="SUPFAM" id="SSF52540">
    <property type="entry name" value="P-loop containing nucleoside triphosphate hydrolases"/>
    <property type="match status" value="1"/>
</dbReference>
<dbReference type="SUPFAM" id="SSF54752">
    <property type="entry name" value="RecA protein, C-terminal domain"/>
    <property type="match status" value="1"/>
</dbReference>
<dbReference type="PROSITE" id="PS00321">
    <property type="entry name" value="RECA_1"/>
    <property type="match status" value="1"/>
</dbReference>
<dbReference type="PROSITE" id="PS50162">
    <property type="entry name" value="RECA_2"/>
    <property type="match status" value="1"/>
</dbReference>
<dbReference type="PROSITE" id="PS50163">
    <property type="entry name" value="RECA_3"/>
    <property type="match status" value="1"/>
</dbReference>
<comment type="function">
    <text evidence="1">Can catalyze the hydrolysis of ATP in the presence of single-stranded DNA, the ATP-dependent uptake of single-stranded DNA by duplex DNA, and the ATP-dependent hybridization of homologous single-stranded DNAs. It interacts with LexA causing its activation and leading to its autocatalytic cleavage.</text>
</comment>
<comment type="subcellular location">
    <subcellularLocation>
        <location evidence="1">Cytoplasm</location>
    </subcellularLocation>
</comment>
<comment type="similarity">
    <text evidence="1">Belongs to the RecA family.</text>
</comment>
<evidence type="ECO:0000255" key="1">
    <source>
        <dbReference type="HAMAP-Rule" id="MF_00268"/>
    </source>
</evidence>
<gene>
    <name evidence="1" type="primary">recA</name>
    <name type="ordered locus">AAur_1594</name>
</gene>
<reference key="1">
    <citation type="journal article" date="2006" name="PLoS Genet.">
        <title>Secrets of soil survival revealed by the genome sequence of Arthrobacter aurescens TC1.</title>
        <authorList>
            <person name="Mongodin E.F."/>
            <person name="Shapir N."/>
            <person name="Daugherty S.C."/>
            <person name="DeBoy R.T."/>
            <person name="Emerson J.B."/>
            <person name="Shvartzbeyn A."/>
            <person name="Radune D."/>
            <person name="Vamathevan J."/>
            <person name="Riggs F."/>
            <person name="Grinberg V."/>
            <person name="Khouri H.M."/>
            <person name="Wackett L.P."/>
            <person name="Nelson K.E."/>
            <person name="Sadowsky M.J."/>
        </authorList>
    </citation>
    <scope>NUCLEOTIDE SEQUENCE [LARGE SCALE GENOMIC DNA]</scope>
    <source>
        <strain>TC1</strain>
    </source>
</reference>
<sequence length="347" mass="37095">MAATPDREKALEAALAQIDKQFGKGSIMRLGDDTRAPIEVIPTGSIALDVALGIGGLPRGRVVEIYGPESSGKTTVALHAVANAQRAGGIAAFIDAEHALDPDYAAKLGVDTDALLVSQPDTGEQALEIMDMLVGSGSLDIVVIDSVAALVPRAEIEGEMGDSHVGLQARLMSQALRKITGRLSQTKTTAIFINQLREKIGVFFGSPETTTGGKALKFYASVRIDVRRIQTLKEGADSVGNRTKAKIVKNKMAPPFKIAEFDIIYGQGISREGGIIDMGVEHGIIKKSGSWFTYDGDQLGQGMENSRRFLRDNPELAQELERLIKEKLGVGVVKTEEDSPKLKAVDG</sequence>
<keyword id="KW-0067">ATP-binding</keyword>
<keyword id="KW-0963">Cytoplasm</keyword>
<keyword id="KW-0227">DNA damage</keyword>
<keyword id="KW-0233">DNA recombination</keyword>
<keyword id="KW-0234">DNA repair</keyword>
<keyword id="KW-0238">DNA-binding</keyword>
<keyword id="KW-0547">Nucleotide-binding</keyword>
<keyword id="KW-0742">SOS response</keyword>
<protein>
    <recommendedName>
        <fullName evidence="1">Protein RecA</fullName>
    </recommendedName>
    <alternativeName>
        <fullName evidence="1">Recombinase A</fullName>
    </alternativeName>
</protein>
<proteinExistence type="inferred from homology"/>
<accession>A1R548</accession>